<comment type="function">
    <text evidence="1">Probable polyketide synthase.</text>
</comment>
<comment type="cofactor">
    <cofactor evidence="1">
        <name>pantetheine 4'-phosphate</name>
        <dbReference type="ChEBI" id="CHEBI:47942"/>
    </cofactor>
    <text evidence="1">Binds 1 phosphopantetheine covalently.</text>
</comment>
<comment type="domain">
    <text evidence="1">Modular protein that is responsible for the completion of one condensation-processing cycle. The beta-ketoacyl synthase region is responsible for the actual condensation reaction while the acyl/malonyl transferase region is responsible for incorporating carboxylic acids units onto an acyl carrier protein (ACP) domain (By similarity).</text>
</comment>
<comment type="miscellaneous">
    <text>Encoded by one of the numerous copies of polyketide synthase genes and clustered as a quintuplet pks5/pks6/pks7/pks8/pks9 in chromosome 2.</text>
</comment>
<reference key="1">
    <citation type="journal article" date="2002" name="Nature">
        <title>Sequence and analysis of chromosome 2 of Dictyostelium discoideum.</title>
        <authorList>
            <person name="Gloeckner G."/>
            <person name="Eichinger L."/>
            <person name="Szafranski K."/>
            <person name="Pachebat J.A."/>
            <person name="Bankier A.T."/>
            <person name="Dear P.H."/>
            <person name="Lehmann R."/>
            <person name="Baumgart C."/>
            <person name="Parra G."/>
            <person name="Abril J.F."/>
            <person name="Guigo R."/>
            <person name="Kumpf K."/>
            <person name="Tunggal B."/>
            <person name="Cox E.C."/>
            <person name="Quail M.A."/>
            <person name="Platzer M."/>
            <person name="Rosenthal A."/>
            <person name="Noegel A.A."/>
        </authorList>
    </citation>
    <scope>NUCLEOTIDE SEQUENCE [LARGE SCALE GENOMIC DNA]</scope>
    <source>
        <strain>AX4</strain>
    </source>
</reference>
<reference key="2">
    <citation type="journal article" date="2005" name="Nature">
        <title>The genome of the social amoeba Dictyostelium discoideum.</title>
        <authorList>
            <person name="Eichinger L."/>
            <person name="Pachebat J.A."/>
            <person name="Gloeckner G."/>
            <person name="Rajandream M.A."/>
            <person name="Sucgang R."/>
            <person name="Berriman M."/>
            <person name="Song J."/>
            <person name="Olsen R."/>
            <person name="Szafranski K."/>
            <person name="Xu Q."/>
            <person name="Tunggal B."/>
            <person name="Kummerfeld S."/>
            <person name="Madera M."/>
            <person name="Konfortov B.A."/>
            <person name="Rivero F."/>
            <person name="Bankier A.T."/>
            <person name="Lehmann R."/>
            <person name="Hamlin N."/>
            <person name="Davies R."/>
            <person name="Gaudet P."/>
            <person name="Fey P."/>
            <person name="Pilcher K."/>
            <person name="Chen G."/>
            <person name="Saunders D."/>
            <person name="Sodergren E.J."/>
            <person name="Davis P."/>
            <person name="Kerhornou A."/>
            <person name="Nie X."/>
            <person name="Hall N."/>
            <person name="Anjard C."/>
            <person name="Hemphill L."/>
            <person name="Bason N."/>
            <person name="Farbrother P."/>
            <person name="Desany B."/>
            <person name="Just E."/>
            <person name="Morio T."/>
            <person name="Rost R."/>
            <person name="Churcher C.M."/>
            <person name="Cooper J."/>
            <person name="Haydock S."/>
            <person name="van Driessche N."/>
            <person name="Cronin A."/>
            <person name="Goodhead I."/>
            <person name="Muzny D.M."/>
            <person name="Mourier T."/>
            <person name="Pain A."/>
            <person name="Lu M."/>
            <person name="Harper D."/>
            <person name="Lindsay R."/>
            <person name="Hauser H."/>
            <person name="James K.D."/>
            <person name="Quiles M."/>
            <person name="Madan Babu M."/>
            <person name="Saito T."/>
            <person name="Buchrieser C."/>
            <person name="Wardroper A."/>
            <person name="Felder M."/>
            <person name="Thangavelu M."/>
            <person name="Johnson D."/>
            <person name="Knights A."/>
            <person name="Loulseged H."/>
            <person name="Mungall K.L."/>
            <person name="Oliver K."/>
            <person name="Price C."/>
            <person name="Quail M.A."/>
            <person name="Urushihara H."/>
            <person name="Hernandez J."/>
            <person name="Rabbinowitsch E."/>
            <person name="Steffen D."/>
            <person name="Sanders M."/>
            <person name="Ma J."/>
            <person name="Kohara Y."/>
            <person name="Sharp S."/>
            <person name="Simmonds M.N."/>
            <person name="Spiegler S."/>
            <person name="Tivey A."/>
            <person name="Sugano S."/>
            <person name="White B."/>
            <person name="Walker D."/>
            <person name="Woodward J.R."/>
            <person name="Winckler T."/>
            <person name="Tanaka Y."/>
            <person name="Shaulsky G."/>
            <person name="Schleicher M."/>
            <person name="Weinstock G.M."/>
            <person name="Rosenthal A."/>
            <person name="Cox E.C."/>
            <person name="Chisholm R.L."/>
            <person name="Gibbs R.A."/>
            <person name="Loomis W.F."/>
            <person name="Platzer M."/>
            <person name="Kay R.R."/>
            <person name="Williams J.G."/>
            <person name="Dear P.H."/>
            <person name="Noegel A.A."/>
            <person name="Barrell B.G."/>
            <person name="Kuspa A."/>
        </authorList>
    </citation>
    <scope>NUCLEOTIDE SEQUENCE [LARGE SCALE GENOMIC DNA]</scope>
    <source>
        <strain>AX4</strain>
    </source>
</reference>
<reference key="3">
    <citation type="journal article" date="2007" name="Bioinformatics">
        <title>Polyketide synthase genes and the natural products potential of Dictyostelium discoideum.</title>
        <authorList>
            <person name="Zucko J."/>
            <person name="Skunca N."/>
            <person name="Curk T."/>
            <person name="Zupan B."/>
            <person name="Long P.F."/>
            <person name="Cullum J."/>
            <person name="Kessin R.H."/>
            <person name="Hranueli D."/>
        </authorList>
    </citation>
    <scope>IDENTIFICATION</scope>
</reference>
<keyword id="KW-0596">Phosphopantetheine</keyword>
<keyword id="KW-0597">Phosphoprotein</keyword>
<keyword id="KW-1185">Reference proteome</keyword>
<keyword id="KW-0808">Transferase</keyword>
<dbReference type="EC" id="2.3.1.-"/>
<dbReference type="EMBL" id="AAFI02000006">
    <property type="protein sequence ID" value="EDR41106.1"/>
    <property type="molecule type" value="Genomic_DNA"/>
</dbReference>
<dbReference type="EMBL" id="AAFI02000169">
    <property type="protein sequence ID" value="EDR41032.1"/>
    <property type="molecule type" value="Genomic_DNA"/>
</dbReference>
<dbReference type="RefSeq" id="XP_001732964.1">
    <property type="nucleotide sequence ID" value="XM_001732912.1"/>
</dbReference>
<dbReference type="RefSeq" id="XP_001733036.1">
    <property type="nucleotide sequence ID" value="XM_001732984.1"/>
</dbReference>
<dbReference type="SMR" id="B0G101"/>
<dbReference type="FunCoup" id="B0G101">
    <property type="interactions" value="4"/>
</dbReference>
<dbReference type="STRING" id="44689.B0G101"/>
<dbReference type="PaxDb" id="44689-DDB0235164"/>
<dbReference type="EnsemblProtists" id="EDR41032">
    <property type="protein sequence ID" value="EDR41032"/>
    <property type="gene ID" value="DDB_G0295667"/>
</dbReference>
<dbReference type="EnsemblProtists" id="EDR41106">
    <property type="protein sequence ID" value="EDR41106"/>
    <property type="gene ID" value="DDB_G0271618"/>
</dbReference>
<dbReference type="GeneID" id="8618020"/>
<dbReference type="GeneID" id="8627806"/>
<dbReference type="KEGG" id="ddi:DDB_G0271618"/>
<dbReference type="KEGG" id="ddi:DDB_G0295667"/>
<dbReference type="dictyBase" id="DDB_G0295667">
    <property type="gene designation" value="pks35"/>
</dbReference>
<dbReference type="dictyBase" id="DDB_G0271618">
    <property type="gene designation" value="pks8"/>
</dbReference>
<dbReference type="VEuPathDB" id="AmoebaDB:DDB_G0271618"/>
<dbReference type="eggNOG" id="KOG1202">
    <property type="taxonomic scope" value="Eukaryota"/>
</dbReference>
<dbReference type="HOGENOM" id="CLU_000022_31_0_1"/>
<dbReference type="InParanoid" id="B0G101"/>
<dbReference type="PhylomeDB" id="B0G101"/>
<dbReference type="PRO" id="PR:B0G101"/>
<dbReference type="Proteomes" id="UP000002195">
    <property type="component" value="Chromosome 2"/>
</dbReference>
<dbReference type="Proteomes" id="UP000002195">
    <property type="component" value="Chromosome 5"/>
</dbReference>
<dbReference type="GO" id="GO:0004315">
    <property type="term" value="F:3-oxoacyl-[acyl-carrier-protein] synthase activity"/>
    <property type="evidence" value="ECO:0007669"/>
    <property type="project" value="InterPro"/>
</dbReference>
<dbReference type="GO" id="GO:0016491">
    <property type="term" value="F:oxidoreductase activity"/>
    <property type="evidence" value="ECO:0007669"/>
    <property type="project" value="InterPro"/>
</dbReference>
<dbReference type="GO" id="GO:0006633">
    <property type="term" value="P:fatty acid biosynthetic process"/>
    <property type="evidence" value="ECO:0000318"/>
    <property type="project" value="GO_Central"/>
</dbReference>
<dbReference type="CDD" id="cd02440">
    <property type="entry name" value="AdoMet_MTases"/>
    <property type="match status" value="1"/>
</dbReference>
<dbReference type="CDD" id="cd05195">
    <property type="entry name" value="enoyl_red"/>
    <property type="match status" value="1"/>
</dbReference>
<dbReference type="CDD" id="cd08954">
    <property type="entry name" value="KR_1_FAS_SDR_x"/>
    <property type="match status" value="1"/>
</dbReference>
<dbReference type="CDD" id="cd00833">
    <property type="entry name" value="PKS"/>
    <property type="match status" value="1"/>
</dbReference>
<dbReference type="Gene3D" id="3.40.47.10">
    <property type="match status" value="1"/>
</dbReference>
<dbReference type="Gene3D" id="1.10.1200.10">
    <property type="entry name" value="ACP-like"/>
    <property type="match status" value="1"/>
</dbReference>
<dbReference type="Gene3D" id="3.40.366.10">
    <property type="entry name" value="Malonyl-Coenzyme A Acyl Carrier Protein, domain 2"/>
    <property type="match status" value="1"/>
</dbReference>
<dbReference type="Gene3D" id="3.90.180.10">
    <property type="entry name" value="Medium-chain alcohol dehydrogenases, catalytic domain"/>
    <property type="match status" value="1"/>
</dbReference>
<dbReference type="Gene3D" id="3.40.50.720">
    <property type="entry name" value="NAD(P)-binding Rossmann-like Domain"/>
    <property type="match status" value="2"/>
</dbReference>
<dbReference type="Gene3D" id="3.10.129.110">
    <property type="entry name" value="Polyketide synthase dehydratase"/>
    <property type="match status" value="1"/>
</dbReference>
<dbReference type="Gene3D" id="3.40.50.150">
    <property type="entry name" value="Vaccinia Virus protein VP39"/>
    <property type="match status" value="1"/>
</dbReference>
<dbReference type="InterPro" id="IPR001227">
    <property type="entry name" value="Ac_transferase_dom_sf"/>
</dbReference>
<dbReference type="InterPro" id="IPR036736">
    <property type="entry name" value="ACP-like_sf"/>
</dbReference>
<dbReference type="InterPro" id="IPR014043">
    <property type="entry name" value="Acyl_transferase_dom"/>
</dbReference>
<dbReference type="InterPro" id="IPR016035">
    <property type="entry name" value="Acyl_Trfase/lysoPLipase"/>
</dbReference>
<dbReference type="InterPro" id="IPR013154">
    <property type="entry name" value="ADH-like_N"/>
</dbReference>
<dbReference type="InterPro" id="IPR011032">
    <property type="entry name" value="GroES-like_sf"/>
</dbReference>
<dbReference type="InterPro" id="IPR018201">
    <property type="entry name" value="Ketoacyl_synth_AS"/>
</dbReference>
<dbReference type="InterPro" id="IPR014031">
    <property type="entry name" value="Ketoacyl_synth_C"/>
</dbReference>
<dbReference type="InterPro" id="IPR014030">
    <property type="entry name" value="Ketoacyl_synth_N"/>
</dbReference>
<dbReference type="InterPro" id="IPR016036">
    <property type="entry name" value="Malonyl_transacylase_ACP-bd"/>
</dbReference>
<dbReference type="InterPro" id="IPR013217">
    <property type="entry name" value="Methyltransf_12"/>
</dbReference>
<dbReference type="InterPro" id="IPR036291">
    <property type="entry name" value="NAD(P)-bd_dom_sf"/>
</dbReference>
<dbReference type="InterPro" id="IPR032821">
    <property type="entry name" value="PKS_assoc"/>
</dbReference>
<dbReference type="InterPro" id="IPR020841">
    <property type="entry name" value="PKS_Beta-ketoAc_synthase_dom"/>
</dbReference>
<dbReference type="InterPro" id="IPR042104">
    <property type="entry name" value="PKS_dehydratase_sf"/>
</dbReference>
<dbReference type="InterPro" id="IPR020843">
    <property type="entry name" value="PKS_ER"/>
</dbReference>
<dbReference type="InterPro" id="IPR013968">
    <property type="entry name" value="PKS_KR"/>
</dbReference>
<dbReference type="InterPro" id="IPR049900">
    <property type="entry name" value="PKS_mFAS_DH"/>
</dbReference>
<dbReference type="InterPro" id="IPR050444">
    <property type="entry name" value="Polyketide_Synthase"/>
</dbReference>
<dbReference type="InterPro" id="IPR009081">
    <property type="entry name" value="PP-bd_ACP"/>
</dbReference>
<dbReference type="InterPro" id="IPR029063">
    <property type="entry name" value="SAM-dependent_MTases_sf"/>
</dbReference>
<dbReference type="InterPro" id="IPR016039">
    <property type="entry name" value="Thiolase-like"/>
</dbReference>
<dbReference type="PANTHER" id="PTHR45681:SF7">
    <property type="entry name" value="POLYKETIDE SYNTHASE 13-RELATED"/>
    <property type="match status" value="1"/>
</dbReference>
<dbReference type="PANTHER" id="PTHR45681">
    <property type="entry name" value="POLYKETIDE SYNTHASE 44-RELATED"/>
    <property type="match status" value="1"/>
</dbReference>
<dbReference type="Pfam" id="PF23297">
    <property type="entry name" value="ACP_SdgA_C"/>
    <property type="match status" value="1"/>
</dbReference>
<dbReference type="Pfam" id="PF00698">
    <property type="entry name" value="Acyl_transf_1"/>
    <property type="match status" value="1"/>
</dbReference>
<dbReference type="Pfam" id="PF08240">
    <property type="entry name" value="ADH_N"/>
    <property type="match status" value="1"/>
</dbReference>
<dbReference type="Pfam" id="PF16197">
    <property type="entry name" value="KAsynt_C_assoc"/>
    <property type="match status" value="1"/>
</dbReference>
<dbReference type="Pfam" id="PF00109">
    <property type="entry name" value="ketoacyl-synt"/>
    <property type="match status" value="1"/>
</dbReference>
<dbReference type="Pfam" id="PF02801">
    <property type="entry name" value="Ketoacyl-synt_C"/>
    <property type="match status" value="1"/>
</dbReference>
<dbReference type="Pfam" id="PF08659">
    <property type="entry name" value="KR"/>
    <property type="match status" value="1"/>
</dbReference>
<dbReference type="Pfam" id="PF08242">
    <property type="entry name" value="Methyltransf_12"/>
    <property type="match status" value="1"/>
</dbReference>
<dbReference type="SMART" id="SM00827">
    <property type="entry name" value="PKS_AT"/>
    <property type="match status" value="1"/>
</dbReference>
<dbReference type="SMART" id="SM00829">
    <property type="entry name" value="PKS_ER"/>
    <property type="match status" value="1"/>
</dbReference>
<dbReference type="SMART" id="SM00822">
    <property type="entry name" value="PKS_KR"/>
    <property type="match status" value="1"/>
</dbReference>
<dbReference type="SMART" id="SM00825">
    <property type="entry name" value="PKS_KS"/>
    <property type="match status" value="1"/>
</dbReference>
<dbReference type="SUPFAM" id="SSF47336">
    <property type="entry name" value="ACP-like"/>
    <property type="match status" value="1"/>
</dbReference>
<dbReference type="SUPFAM" id="SSF52151">
    <property type="entry name" value="FabD/lysophospholipase-like"/>
    <property type="match status" value="1"/>
</dbReference>
<dbReference type="SUPFAM" id="SSF50129">
    <property type="entry name" value="GroES-like"/>
    <property type="match status" value="1"/>
</dbReference>
<dbReference type="SUPFAM" id="SSF51735">
    <property type="entry name" value="NAD(P)-binding Rossmann-fold domains"/>
    <property type="match status" value="2"/>
</dbReference>
<dbReference type="SUPFAM" id="SSF55048">
    <property type="entry name" value="Probable ACP-binding domain of malonyl-CoA ACP transacylase"/>
    <property type="match status" value="1"/>
</dbReference>
<dbReference type="SUPFAM" id="SSF53335">
    <property type="entry name" value="S-adenosyl-L-methionine-dependent methyltransferases"/>
    <property type="match status" value="1"/>
</dbReference>
<dbReference type="SUPFAM" id="SSF53901">
    <property type="entry name" value="Thiolase-like"/>
    <property type="match status" value="1"/>
</dbReference>
<dbReference type="PROSITE" id="PS50075">
    <property type="entry name" value="CARRIER"/>
    <property type="match status" value="1"/>
</dbReference>
<dbReference type="PROSITE" id="PS00606">
    <property type="entry name" value="KS3_1"/>
    <property type="match status" value="1"/>
</dbReference>
<dbReference type="PROSITE" id="PS52004">
    <property type="entry name" value="KS3_2"/>
    <property type="match status" value="1"/>
</dbReference>
<dbReference type="PROSITE" id="PS52019">
    <property type="entry name" value="PKS_MFAS_DH"/>
    <property type="match status" value="1"/>
</dbReference>
<gene>
    <name type="primary">pks8</name>
    <name type="ORF">DDB_G0271618</name>
</gene>
<gene>
    <name type="primary">pks35</name>
    <name type="ORF">DDB_G0295667</name>
</gene>
<name>PKS8_DICDI</name>
<feature type="chain" id="PRO_0000376883" description="Probable polyketide synthase 8/35">
    <location>
        <begin position="1"/>
        <end position="2514"/>
    </location>
</feature>
<feature type="domain" description="Ketosynthase family 3 (KS3)" evidence="3">
    <location>
        <begin position="11"/>
        <end position="442"/>
    </location>
</feature>
<feature type="domain" description="PKS/mFAS DH" evidence="4">
    <location>
        <begin position="925"/>
        <end position="1209"/>
    </location>
</feature>
<feature type="domain" description="Carrier" evidence="2">
    <location>
        <begin position="2431"/>
        <end position="2508"/>
    </location>
</feature>
<feature type="region of interest" description="Acyl/malonyl transferase">
    <location>
        <begin position="635"/>
        <end position="668"/>
    </location>
</feature>
<feature type="region of interest" description="N-terminal hotdog fold" evidence="4">
    <location>
        <begin position="925"/>
        <end position="1047"/>
    </location>
</feature>
<feature type="region of interest" description="C-terminal hotdog fold" evidence="4">
    <location>
        <begin position="1064"/>
        <end position="1209"/>
    </location>
</feature>
<feature type="active site" description="For beta-ketoacyl synthase activity" evidence="3">
    <location>
        <position position="181"/>
    </location>
</feature>
<feature type="active site" description="For beta-ketoacyl synthase activity" evidence="3">
    <location>
        <position position="323"/>
    </location>
</feature>
<feature type="active site" description="For beta-ketoacyl synthase activity" evidence="3">
    <location>
        <position position="362"/>
    </location>
</feature>
<feature type="active site" description="For acyl/malonyl transferase activity" evidence="5">
    <location>
        <position position="645"/>
    </location>
</feature>
<feature type="active site" description="Proton acceptor; for dehydratase activity" evidence="4">
    <location>
        <position position="959"/>
    </location>
</feature>
<feature type="active site" description="Proton donor; for dehydratase activity" evidence="4">
    <location>
        <position position="1122"/>
    </location>
</feature>
<feature type="modified residue" description="O-(pantetheine 4'-phosphoryl)serine" evidence="2">
    <location>
        <position position="2468"/>
    </location>
</feature>
<accession>B0G101</accession>
<accession>Q86AE5</accession>
<accession>Q86JI2</accession>
<protein>
    <recommendedName>
        <fullName>Probable polyketide synthase 8/35</fullName>
        <shortName>dipks35</shortName>
        <shortName>dipks8</shortName>
        <ecNumber>2.3.1.-</ecNumber>
    </recommendedName>
</protein>
<proteinExistence type="inferred from homology"/>
<sequence length="2514" mass="285291">MNNLEIINLIDKGVAIVGVGFRIPSGNNENSICSPDDLFNNLKNGFDGVSSTSERWSDNFHKLGEISSPNAGLLPFNECKSFDPLFFGINPSDAHQIDPQQRLLLKCTWEALEDASIDPISIRGTNTSVFIGSSNIDYQHINKHQDSVLKNVIAQSAYAVSNRISYCFDFNGPSLSIDTACSSSLNAVSQGYHSILNGTSNMSIVGGVNLILDVGMIKAYSYLSMLSKTHGKCKAFDESGDGFTRGECATIVVLKNLQDAVKDGNRIYCVINGSSSNVDGGGHMDKVNLYSPSKQSQFNNINSAFKSTNGKLSINDIQYIEAHGTGTKTGDPIETEAISMAFKNRDKSTPILIGSIKSNIGHCEAGSGVASLIKCCLMFKYQCFLPNIHFKNPNPLIKFNEWNLKVVTSPIPFNKRINEKPVSMMINNFGVTGSNCCLLISEFKKQDYESYENNNNNKSNHKNILIPFSANSSNSLNQYQSKFKNIINNQFNFIDFTANQIYSKSNYLYQRSVVIASNSNELFEKILNKKQIQTKNSIISNMSFKGKNPITIFVFSGQGSQYPKMALELYNNDEIFKKSIDLIDSKLSKYYGYSVWGKLTTIKDDDLTSIHDPIFAQPALCMLSVSLFEIYCHWGVNPSFILGHSLGEISAAYCSGMIDLDTFCYTVYYRSIAQSKTNGCGRMLSINISDEEFKSMYSQKYPQIEIACYNSPQSIVVAGNESILNEISKELKEKEIFTAMLGSLSSFHTSSQQCTKDSILQLNIESNQPKVPIFSTVTTNLFNESNRFNSQYVYDNIIKPVKFTQTISNIYKHIESNQLNNDIVFIEIAPHPTISFYIKQMVPSSLNESVSVYSALHKKKNDVEEFQQTISNLYCQNGYSINFKCQLENKKSNQSINLPLYQWDDELYFAQTQTLEQYTKEGPPIDHLGLSNSYYSPFKNSYRTFIDINNKPFQYLKGHMVKGKYYFPGCGYIDIIIQLYKNQDIFISFIEFKTPLILIEGINQYLQTNIQQTGKSEYRAQFHFKDQKSNEWIQSSNANFQLLDHGNDIPSNYNIEEIIKNKCNLSKLTKNELYTQIKSKTGLNYTGVFQGATECYLGNDCSLSVLSLKSQTNSFLNIPILDTCLHGMLVLINDQSQIVFDKAIGFKYYSSNIPSDLKEYKDSIYVYSNLKPKNADSYHGSIIVMLSDGSVLYEIQEVIFKSLIPIKHSLKIEYPNDELYKVHLQSKDSQIPTPSSFKSIIYENDFFHSALNIPEDLFKYISTLFYKDIIKRCPEININKINSHSVNEIISSFSKISKNQRLFRFVFETIKENGILNSLEENDDAYFEFNELVIKSSKIISKLLFPLESDNDNEDLPQSLFQNGLMDKIYKCSYLRKKYQMISHVIIHSIKEIINNNIIIRILEFGGGTASLSVEVIGEIVALLQENPNYQVEIEYTWSDISPAFIADAKNKINKIINDAAITNGLNVIYRSLTIDESLLENQAIKPSYYDFVIMSNVLHVVKNIKQAVEQMYQLLTPNGQLLFIEPPYKSVLIDSIIGSFEQWWSFTDTDIRKDRCGMSQQSWYQLLKTCNFKDILMSKECIFVGSVIHAQKPPISLLNSQPKHDNIIIYGGGGNLSFVENIKLDSNSKSLIQIETIQEFNQLLSQSTITNDSIIYFIKTLETLSLDNYKQITLEYIEINQRLLQINSLCKHVLIVSDSRKTNYLASSVVGAARYFDEFQQLKLHTLDFDYDSTQNYINSKNNKMVQFINILVDSKTNVHKEMIIINNKVYYEIVQKEKNLKLKYNSESFENQNNLMCSLSPNLEYQLQSKQIKLRDNQVEVKTIATGINYKDYLNFSGSNNNNGDDNTGLPQFGYEFSGIITRVGNNVKDYKVGDNVFGLSNSCTSSHIVTNFKNIQLKPSNISHNEASSIPIDYLTSFMSLFNVGSLNIEDNESILIHLGSDSFGLSTFEILKWKGFKSNLFVTVDLDETKQYLLDRYGDFITGIYSNTDKSYVTEIKNELIKLGSKKKGVDLILNTLPSDFMDSNFELLTKSGRIIDLTSNHLNQSEFLKNINFKYNHGYHNFQLSLIQKNKIQKCLYEISHAIENGELKTIPIKEFTNLNIKDAIKYITNGNIEKITVSHDHEIYSDIIYRSLDEKEFSILKSNYQINSNNLGKNILITGQSGIILEILKWIIKYSNINTIENVIILSRSSLKWELELLINQTKLSNNNIKFHFKSVDVGDSEQVDNAINEILNENQQITNIDSIYHFAFQQITCKVQEINMKHLDISHGAKSMGAVNLHNQSIKRNWKLINFVMASSALSLIGSTDQCTYACANLLLDSFSKYRESLGLPSACINLGSIESTGFVSKNESISEFTDGIGYVPTPINLVLGLLDLQIQNAGKFTNSMLSNLISSKFKNIQQTSLFLKFDYLMNLNDNSEQTKKENIGNKNIDELFIEKVSELFSTDQSRINKNLRLIDYGADSLIIVQLKNWIDKEIGINLITIKQLQNNTINISIKMILNSLMKNNQI</sequence>
<organism>
    <name type="scientific">Dictyostelium discoideum</name>
    <name type="common">Social amoeba</name>
    <dbReference type="NCBI Taxonomy" id="44689"/>
    <lineage>
        <taxon>Eukaryota</taxon>
        <taxon>Amoebozoa</taxon>
        <taxon>Evosea</taxon>
        <taxon>Eumycetozoa</taxon>
        <taxon>Dictyostelia</taxon>
        <taxon>Dictyosteliales</taxon>
        <taxon>Dictyosteliaceae</taxon>
        <taxon>Dictyostelium</taxon>
    </lineage>
</organism>
<evidence type="ECO:0000250" key="1"/>
<evidence type="ECO:0000255" key="2">
    <source>
        <dbReference type="PROSITE-ProRule" id="PRU00258"/>
    </source>
</evidence>
<evidence type="ECO:0000255" key="3">
    <source>
        <dbReference type="PROSITE-ProRule" id="PRU01348"/>
    </source>
</evidence>
<evidence type="ECO:0000255" key="4">
    <source>
        <dbReference type="PROSITE-ProRule" id="PRU01363"/>
    </source>
</evidence>
<evidence type="ECO:0000255" key="5">
    <source>
        <dbReference type="PROSITE-ProRule" id="PRU10022"/>
    </source>
</evidence>